<sequence>MAQNKPVKKIVLAYSGGLDTSVILTWLKDTYGCEVIAFTADIGQKEELSGLEEKGIKTGASKVYIQDLRLEFARDFIFPAIQGNAIYEMRYLLGTSLARPLIAKAMVEVAEKEGADAFAHGATGKGNDQVRFELGVKSLAPEKTIIAPWRIWSFGGRSDLIEYAKSKGIPVPVTAEKPYSMDRNLMHISYEGGILEDPYKEPDEKMFLLTTSPEKAPDAPEYLELDFEEGNCVAINGKKMNPLEIMETLNTIAGKHGVGRVDIVENRLVGIKSRGVYETPGGTILFLAHRDLESITIDRDTQHHKDKLSIEFAELIYNGHWFSSRMKAVRAFITETQRYVSGTVRIKLYKGVCSVVGRKSQVSLYNPEMATFEKEELYNQKDAEGFINIYGLPAQETARLRKK</sequence>
<evidence type="ECO:0000255" key="1">
    <source>
        <dbReference type="HAMAP-Rule" id="MF_00005"/>
    </source>
</evidence>
<keyword id="KW-0028">Amino-acid biosynthesis</keyword>
<keyword id="KW-0055">Arginine biosynthesis</keyword>
<keyword id="KW-0067">ATP-binding</keyword>
<keyword id="KW-0963">Cytoplasm</keyword>
<keyword id="KW-0436">Ligase</keyword>
<keyword id="KW-0547">Nucleotide-binding</keyword>
<keyword id="KW-1185">Reference proteome</keyword>
<dbReference type="EC" id="6.3.4.5" evidence="1"/>
<dbReference type="EMBL" id="AE010300">
    <property type="protein sequence ID" value="AAN51364.1"/>
    <property type="molecule type" value="Genomic_DNA"/>
</dbReference>
<dbReference type="RefSeq" id="NP_714346.1">
    <property type="nucleotide sequence ID" value="NC_004342.2"/>
</dbReference>
<dbReference type="RefSeq" id="WP_000068290.1">
    <property type="nucleotide sequence ID" value="NC_004342.2"/>
</dbReference>
<dbReference type="SMR" id="Q8EYP7"/>
<dbReference type="FunCoup" id="Q8EYP7">
    <property type="interactions" value="443"/>
</dbReference>
<dbReference type="STRING" id="189518.LA_4165"/>
<dbReference type="PaxDb" id="189518-LA_4165"/>
<dbReference type="EnsemblBacteria" id="AAN51364">
    <property type="protein sequence ID" value="AAN51364"/>
    <property type="gene ID" value="LA_4165"/>
</dbReference>
<dbReference type="KEGG" id="lil:LA_4165"/>
<dbReference type="PATRIC" id="fig|189518.3.peg.4137"/>
<dbReference type="HOGENOM" id="CLU_032784_4_2_12"/>
<dbReference type="InParanoid" id="Q8EYP7"/>
<dbReference type="OrthoDB" id="9801641at2"/>
<dbReference type="UniPathway" id="UPA00068">
    <property type="reaction ID" value="UER00113"/>
</dbReference>
<dbReference type="Proteomes" id="UP000001408">
    <property type="component" value="Chromosome I"/>
</dbReference>
<dbReference type="GO" id="GO:0005737">
    <property type="term" value="C:cytoplasm"/>
    <property type="evidence" value="ECO:0000318"/>
    <property type="project" value="GO_Central"/>
</dbReference>
<dbReference type="GO" id="GO:0004055">
    <property type="term" value="F:argininosuccinate synthase activity"/>
    <property type="evidence" value="ECO:0000318"/>
    <property type="project" value="GO_Central"/>
</dbReference>
<dbReference type="GO" id="GO:0005524">
    <property type="term" value="F:ATP binding"/>
    <property type="evidence" value="ECO:0007669"/>
    <property type="project" value="UniProtKB-UniRule"/>
</dbReference>
<dbReference type="GO" id="GO:0000053">
    <property type="term" value="P:argininosuccinate metabolic process"/>
    <property type="evidence" value="ECO:0000318"/>
    <property type="project" value="GO_Central"/>
</dbReference>
<dbReference type="GO" id="GO:0006526">
    <property type="term" value="P:L-arginine biosynthetic process"/>
    <property type="evidence" value="ECO:0000318"/>
    <property type="project" value="GO_Central"/>
</dbReference>
<dbReference type="GO" id="GO:0000050">
    <property type="term" value="P:urea cycle"/>
    <property type="evidence" value="ECO:0000318"/>
    <property type="project" value="GO_Central"/>
</dbReference>
<dbReference type="CDD" id="cd01999">
    <property type="entry name" value="ASS"/>
    <property type="match status" value="1"/>
</dbReference>
<dbReference type="FunFam" id="3.40.50.620:FF:000019">
    <property type="entry name" value="Argininosuccinate synthase"/>
    <property type="match status" value="1"/>
</dbReference>
<dbReference type="FunFam" id="3.90.1260.10:FF:000007">
    <property type="entry name" value="Argininosuccinate synthase"/>
    <property type="match status" value="1"/>
</dbReference>
<dbReference type="Gene3D" id="3.90.1260.10">
    <property type="entry name" value="Argininosuccinate synthetase, chain A, domain 2"/>
    <property type="match status" value="1"/>
</dbReference>
<dbReference type="Gene3D" id="3.40.50.620">
    <property type="entry name" value="HUPs"/>
    <property type="match status" value="1"/>
</dbReference>
<dbReference type="HAMAP" id="MF_00005">
    <property type="entry name" value="Arg_succ_synth_type1"/>
    <property type="match status" value="1"/>
</dbReference>
<dbReference type="InterPro" id="IPR048268">
    <property type="entry name" value="Arginosuc_syn_C"/>
</dbReference>
<dbReference type="InterPro" id="IPR048267">
    <property type="entry name" value="Arginosuc_syn_N"/>
</dbReference>
<dbReference type="InterPro" id="IPR001518">
    <property type="entry name" value="Arginosuc_synth"/>
</dbReference>
<dbReference type="InterPro" id="IPR018223">
    <property type="entry name" value="Arginosuc_synth_CS"/>
</dbReference>
<dbReference type="InterPro" id="IPR023434">
    <property type="entry name" value="Arginosuc_synth_type_1_subfam"/>
</dbReference>
<dbReference type="InterPro" id="IPR024074">
    <property type="entry name" value="AS_cat/multimer_dom_body"/>
</dbReference>
<dbReference type="InterPro" id="IPR014729">
    <property type="entry name" value="Rossmann-like_a/b/a_fold"/>
</dbReference>
<dbReference type="NCBIfam" id="TIGR00032">
    <property type="entry name" value="argG"/>
    <property type="match status" value="1"/>
</dbReference>
<dbReference type="NCBIfam" id="NF001770">
    <property type="entry name" value="PRK00509.1"/>
    <property type="match status" value="1"/>
</dbReference>
<dbReference type="PANTHER" id="PTHR11587">
    <property type="entry name" value="ARGININOSUCCINATE SYNTHASE"/>
    <property type="match status" value="1"/>
</dbReference>
<dbReference type="PANTHER" id="PTHR11587:SF2">
    <property type="entry name" value="ARGININOSUCCINATE SYNTHASE"/>
    <property type="match status" value="1"/>
</dbReference>
<dbReference type="Pfam" id="PF20979">
    <property type="entry name" value="Arginosuc_syn_C"/>
    <property type="match status" value="1"/>
</dbReference>
<dbReference type="Pfam" id="PF00764">
    <property type="entry name" value="Arginosuc_synth"/>
    <property type="match status" value="1"/>
</dbReference>
<dbReference type="SUPFAM" id="SSF52402">
    <property type="entry name" value="Adenine nucleotide alpha hydrolases-like"/>
    <property type="match status" value="1"/>
</dbReference>
<dbReference type="SUPFAM" id="SSF69864">
    <property type="entry name" value="Argininosuccinate synthetase, C-terminal domain"/>
    <property type="match status" value="1"/>
</dbReference>
<dbReference type="PROSITE" id="PS00564">
    <property type="entry name" value="ARGININOSUCCIN_SYN_1"/>
    <property type="match status" value="1"/>
</dbReference>
<dbReference type="PROSITE" id="PS00565">
    <property type="entry name" value="ARGININOSUCCIN_SYN_2"/>
    <property type="match status" value="1"/>
</dbReference>
<organism>
    <name type="scientific">Leptospira interrogans serogroup Icterohaemorrhagiae serovar Lai (strain 56601)</name>
    <dbReference type="NCBI Taxonomy" id="189518"/>
    <lineage>
        <taxon>Bacteria</taxon>
        <taxon>Pseudomonadati</taxon>
        <taxon>Spirochaetota</taxon>
        <taxon>Spirochaetia</taxon>
        <taxon>Leptospirales</taxon>
        <taxon>Leptospiraceae</taxon>
        <taxon>Leptospira</taxon>
    </lineage>
</organism>
<proteinExistence type="inferred from homology"/>
<protein>
    <recommendedName>
        <fullName evidence="1">Argininosuccinate synthase</fullName>
        <ecNumber evidence="1">6.3.4.5</ecNumber>
    </recommendedName>
    <alternativeName>
        <fullName evidence="1">Citrulline--aspartate ligase</fullName>
    </alternativeName>
</protein>
<gene>
    <name evidence="1" type="primary">argG</name>
    <name type="ordered locus">LA_4165</name>
</gene>
<comment type="catalytic activity">
    <reaction evidence="1">
        <text>L-citrulline + L-aspartate + ATP = 2-(N(omega)-L-arginino)succinate + AMP + diphosphate + H(+)</text>
        <dbReference type="Rhea" id="RHEA:10932"/>
        <dbReference type="ChEBI" id="CHEBI:15378"/>
        <dbReference type="ChEBI" id="CHEBI:29991"/>
        <dbReference type="ChEBI" id="CHEBI:30616"/>
        <dbReference type="ChEBI" id="CHEBI:33019"/>
        <dbReference type="ChEBI" id="CHEBI:57472"/>
        <dbReference type="ChEBI" id="CHEBI:57743"/>
        <dbReference type="ChEBI" id="CHEBI:456215"/>
        <dbReference type="EC" id="6.3.4.5"/>
    </reaction>
</comment>
<comment type="pathway">
    <text evidence="1">Amino-acid biosynthesis; L-arginine biosynthesis; L-arginine from L-ornithine and carbamoyl phosphate: step 2/3.</text>
</comment>
<comment type="subunit">
    <text evidence="1">Homotetramer.</text>
</comment>
<comment type="subcellular location">
    <subcellularLocation>
        <location evidence="1">Cytoplasm</location>
    </subcellularLocation>
</comment>
<comment type="similarity">
    <text evidence="1">Belongs to the argininosuccinate synthase family. Type 1 subfamily.</text>
</comment>
<feature type="chain" id="PRO_0000148607" description="Argininosuccinate synthase">
    <location>
        <begin position="1"/>
        <end position="403"/>
    </location>
</feature>
<feature type="binding site" evidence="1">
    <location>
        <begin position="13"/>
        <end position="21"/>
    </location>
    <ligand>
        <name>ATP</name>
        <dbReference type="ChEBI" id="CHEBI:30616"/>
    </ligand>
</feature>
<feature type="binding site" evidence="1">
    <location>
        <position position="40"/>
    </location>
    <ligand>
        <name>ATP</name>
        <dbReference type="ChEBI" id="CHEBI:30616"/>
    </ligand>
</feature>
<feature type="binding site" evidence="1">
    <location>
        <position position="91"/>
    </location>
    <ligand>
        <name>L-citrulline</name>
        <dbReference type="ChEBI" id="CHEBI:57743"/>
    </ligand>
</feature>
<feature type="binding site" evidence="1">
    <location>
        <position position="96"/>
    </location>
    <ligand>
        <name>L-citrulline</name>
        <dbReference type="ChEBI" id="CHEBI:57743"/>
    </ligand>
</feature>
<feature type="binding site" evidence="1">
    <location>
        <position position="121"/>
    </location>
    <ligand>
        <name>ATP</name>
        <dbReference type="ChEBI" id="CHEBI:30616"/>
    </ligand>
</feature>
<feature type="binding site" evidence="1">
    <location>
        <position position="123"/>
    </location>
    <ligand>
        <name>L-aspartate</name>
        <dbReference type="ChEBI" id="CHEBI:29991"/>
    </ligand>
</feature>
<feature type="binding site" evidence="1">
    <location>
        <position position="127"/>
    </location>
    <ligand>
        <name>L-aspartate</name>
        <dbReference type="ChEBI" id="CHEBI:29991"/>
    </ligand>
</feature>
<feature type="binding site" evidence="1">
    <location>
        <position position="127"/>
    </location>
    <ligand>
        <name>L-citrulline</name>
        <dbReference type="ChEBI" id="CHEBI:57743"/>
    </ligand>
</feature>
<feature type="binding site" evidence="1">
    <location>
        <position position="128"/>
    </location>
    <ligand>
        <name>L-aspartate</name>
        <dbReference type="ChEBI" id="CHEBI:29991"/>
    </ligand>
</feature>
<feature type="binding site" evidence="1">
    <location>
        <position position="131"/>
    </location>
    <ligand>
        <name>L-citrulline</name>
        <dbReference type="ChEBI" id="CHEBI:57743"/>
    </ligand>
</feature>
<feature type="binding site" evidence="1">
    <location>
        <position position="180"/>
    </location>
    <ligand>
        <name>L-citrulline</name>
        <dbReference type="ChEBI" id="CHEBI:57743"/>
    </ligand>
</feature>
<feature type="binding site" evidence="1">
    <location>
        <position position="189"/>
    </location>
    <ligand>
        <name>L-citrulline</name>
        <dbReference type="ChEBI" id="CHEBI:57743"/>
    </ligand>
</feature>
<feature type="binding site" evidence="1">
    <location>
        <position position="265"/>
    </location>
    <ligand>
        <name>L-citrulline</name>
        <dbReference type="ChEBI" id="CHEBI:57743"/>
    </ligand>
</feature>
<feature type="binding site" evidence="1">
    <location>
        <position position="277"/>
    </location>
    <ligand>
        <name>L-citrulline</name>
        <dbReference type="ChEBI" id="CHEBI:57743"/>
    </ligand>
</feature>
<reference key="1">
    <citation type="journal article" date="2003" name="Nature">
        <title>Unique physiological and pathogenic features of Leptospira interrogans revealed by whole-genome sequencing.</title>
        <authorList>
            <person name="Ren S.-X."/>
            <person name="Fu G."/>
            <person name="Jiang X.-G."/>
            <person name="Zeng R."/>
            <person name="Miao Y.-G."/>
            <person name="Xu H."/>
            <person name="Zhang Y.-X."/>
            <person name="Xiong H."/>
            <person name="Lu G."/>
            <person name="Lu L.-F."/>
            <person name="Jiang H.-Q."/>
            <person name="Jia J."/>
            <person name="Tu Y.-F."/>
            <person name="Jiang J.-X."/>
            <person name="Gu W.-Y."/>
            <person name="Zhang Y.-Q."/>
            <person name="Cai Z."/>
            <person name="Sheng H.-H."/>
            <person name="Yin H.-F."/>
            <person name="Zhang Y."/>
            <person name="Zhu G.-F."/>
            <person name="Wan M."/>
            <person name="Huang H.-L."/>
            <person name="Qian Z."/>
            <person name="Wang S.-Y."/>
            <person name="Ma W."/>
            <person name="Yao Z.-J."/>
            <person name="Shen Y."/>
            <person name="Qiang B.-Q."/>
            <person name="Xia Q.-C."/>
            <person name="Guo X.-K."/>
            <person name="Danchin A."/>
            <person name="Saint Girons I."/>
            <person name="Somerville R.L."/>
            <person name="Wen Y.-M."/>
            <person name="Shi M.-H."/>
            <person name="Chen Z."/>
            <person name="Xu J.-G."/>
            <person name="Zhao G.-P."/>
        </authorList>
    </citation>
    <scope>NUCLEOTIDE SEQUENCE [LARGE SCALE GENOMIC DNA]</scope>
    <source>
        <strain>56601</strain>
    </source>
</reference>
<accession>Q8EYP7</accession>
<name>ASSY_LEPIN</name>